<feature type="chain" id="PRO_0000373603" description="Penton protein H240R">
    <location>
        <begin position="1"/>
        <end position="236"/>
    </location>
</feature>
<accession>P0CAA9</accession>
<keyword id="KW-0426">Late protein</keyword>
<keyword id="KW-0946">Virion</keyword>
<proteinExistence type="inferred from homology"/>
<name>CAPSP_ASFWA</name>
<organism>
    <name type="scientific">African swine fever virus (isolate Warthog/Namibia/Wart80/1980)</name>
    <name type="common">ASFV</name>
    <dbReference type="NCBI Taxonomy" id="561444"/>
    <lineage>
        <taxon>Viruses</taxon>
        <taxon>Varidnaviria</taxon>
        <taxon>Bamfordvirae</taxon>
        <taxon>Nucleocytoviricota</taxon>
        <taxon>Pokkesviricetes</taxon>
        <taxon>Asfuvirales</taxon>
        <taxon>Asfarviridae</taxon>
        <taxon>Asfivirus</taxon>
        <taxon>African swine fever virus</taxon>
    </lineage>
</organism>
<comment type="function">
    <text evidence="1">Forms the penton at the fivefold vertices of the icosahedral capsid (By similarity). Together with the minor capsid proteins (p17, p49, and M1249L), forms a complicated network immediately below the outer capsid shell, stabilizing the whole capsid (By similarity).</text>
</comment>
<comment type="subcellular location">
    <subcellularLocation>
        <location evidence="1">Virion</location>
    </subcellularLocation>
</comment>
<comment type="induction">
    <text evidence="2">Expressed in the late phase of the viral replicative cycle.</text>
</comment>
<comment type="similarity">
    <text evidence="2">Belongs to the asfivirus H240R family.</text>
</comment>
<evidence type="ECO:0000250" key="1">
    <source>
        <dbReference type="UniProtKB" id="Q65190"/>
    </source>
</evidence>
<evidence type="ECO:0000305" key="2"/>
<protein>
    <recommendedName>
        <fullName evidence="1">Penton protein H240R</fullName>
        <shortName>pH240R</shortName>
    </recommendedName>
</protein>
<sequence length="236" mass="27101">MAATRAAPKTASKKEHQYCLLDSQEKRHGHYPFSFELKPYGQTGANIIGVQGSLTHVIKMTVFPFMIPFPLQKIHIDDFIGGRVYLFFKELDVQAISDVNGMQYHFEFKVVPVSSNQVELLPVNNKYKFTYAIPEVQYLTPIFYDLSGPLNFPLDTLSVHVDSLTNHIQLPIQNHNLTTGDRVFISGYKHLQTIELCKNNKIFIKCIPPLSSEKIKLYIPKNRIRIPLYFKSLKNV</sequence>
<organismHost>
    <name type="scientific">Ornithodoros</name>
    <name type="common">relapsing fever ticks</name>
    <dbReference type="NCBI Taxonomy" id="6937"/>
</organismHost>
<organismHost>
    <name type="scientific">Phacochoerus aethiopicus</name>
    <name type="common">Warthog</name>
    <dbReference type="NCBI Taxonomy" id="85517"/>
</organismHost>
<organismHost>
    <name type="scientific">Phacochoerus africanus</name>
    <name type="common">Warthog</name>
    <dbReference type="NCBI Taxonomy" id="41426"/>
</organismHost>
<organismHost>
    <name type="scientific">Potamochoerus larvatus</name>
    <name type="common">Bushpig</name>
    <dbReference type="NCBI Taxonomy" id="273792"/>
</organismHost>
<organismHost>
    <name type="scientific">Sus scrofa</name>
    <name type="common">Pig</name>
    <dbReference type="NCBI Taxonomy" id="9823"/>
</organismHost>
<dbReference type="EMBL" id="AY261366">
    <property type="status" value="NOT_ANNOTATED_CDS"/>
    <property type="molecule type" value="Genomic_DNA"/>
</dbReference>
<dbReference type="SMR" id="P0CAA9"/>
<dbReference type="Proteomes" id="UP000000858">
    <property type="component" value="Segment"/>
</dbReference>
<dbReference type="GO" id="GO:0044423">
    <property type="term" value="C:virion component"/>
    <property type="evidence" value="ECO:0007669"/>
    <property type="project" value="UniProtKB-KW"/>
</dbReference>
<gene>
    <name type="ordered locus">War-130</name>
</gene>
<reference key="1">
    <citation type="submission" date="2003-03" db="EMBL/GenBank/DDBJ databases">
        <title>African swine fever virus genomes.</title>
        <authorList>
            <person name="Kutish G.F."/>
            <person name="Rock D.L."/>
        </authorList>
    </citation>
    <scope>NUCLEOTIDE SEQUENCE [LARGE SCALE GENOMIC DNA]</scope>
</reference>